<evidence type="ECO:0000250" key="1"/>
<evidence type="ECO:0000255" key="2"/>
<evidence type="ECO:0000305" key="3"/>
<protein>
    <recommendedName>
        <fullName>Pantothenate kinase</fullName>
        <ecNumber>2.7.1.33</ecNumber>
    </recommendedName>
    <alternativeName>
        <fullName>Pantothenic acid kinase</fullName>
    </alternativeName>
</protein>
<proteinExistence type="inferred from homology"/>
<name>COAA_HALH5</name>
<sequence>MATIEACDFFPYTVLSRSQWKSLRKASSLPINEQELEQLVGLNEPITLNEVADIYVPLAELLHVHATAYQRLQQQKRGFFHHGKNRSPFIIGLAGSVAVGKSTTARLLQKLLKAWPEHHHVDLVTTDGFLYPNETLEARGLMDKKGFPESYDLPALIRFLSDVKAGEPYVKAPVYSHLTYNIVEGDYQVVHEPDIVIVEGINVLQVNKRNHHIPNVFVSDFFDFSIYVDAKEEQILQWYIERFKLLQNTAFQDPNSYFHRFRHLSEVEAEQFATSIWKNINGVNLHENILPTKHRADLVLQKGPHHFIDEVKLRNI</sequence>
<feature type="chain" id="PRO_0000194418" description="Pantothenate kinase">
    <location>
        <begin position="1"/>
        <end position="316"/>
    </location>
</feature>
<feature type="binding site" evidence="2">
    <location>
        <begin position="95"/>
        <end position="102"/>
    </location>
    <ligand>
        <name>ATP</name>
        <dbReference type="ChEBI" id="CHEBI:30616"/>
    </ligand>
</feature>
<keyword id="KW-0067">ATP-binding</keyword>
<keyword id="KW-0173">Coenzyme A biosynthesis</keyword>
<keyword id="KW-0963">Cytoplasm</keyword>
<keyword id="KW-0418">Kinase</keyword>
<keyword id="KW-0547">Nucleotide-binding</keyword>
<keyword id="KW-1185">Reference proteome</keyword>
<keyword id="KW-0808">Transferase</keyword>
<reference key="1">
    <citation type="journal article" date="2000" name="Nucleic Acids Res.">
        <title>Complete genome sequence of the alkaliphilic bacterium Bacillus halodurans and genomic sequence comparison with Bacillus subtilis.</title>
        <authorList>
            <person name="Takami H."/>
            <person name="Nakasone K."/>
            <person name="Takaki Y."/>
            <person name="Maeno G."/>
            <person name="Sasaki R."/>
            <person name="Masui N."/>
            <person name="Fuji F."/>
            <person name="Hirama C."/>
            <person name="Nakamura Y."/>
            <person name="Ogasawara N."/>
            <person name="Kuhara S."/>
            <person name="Horikoshi K."/>
        </authorList>
    </citation>
    <scope>NUCLEOTIDE SEQUENCE [LARGE SCALE GENOMIC DNA]</scope>
    <source>
        <strain>ATCC BAA-125 / DSM 18197 / FERM 7344 / JCM 9153 / C-125</strain>
    </source>
</reference>
<dbReference type="EC" id="2.7.1.33"/>
<dbReference type="EMBL" id="BA000004">
    <property type="protein sequence ID" value="BAB06594.1"/>
    <property type="molecule type" value="Genomic_DNA"/>
</dbReference>
<dbReference type="PIR" id="C84009">
    <property type="entry name" value="C84009"/>
</dbReference>
<dbReference type="RefSeq" id="WP_010899022.1">
    <property type="nucleotide sequence ID" value="NC_002570.2"/>
</dbReference>
<dbReference type="SMR" id="Q9K8X7"/>
<dbReference type="STRING" id="272558.gene:10728785"/>
<dbReference type="KEGG" id="bha:BH2875"/>
<dbReference type="eggNOG" id="COG1072">
    <property type="taxonomic scope" value="Bacteria"/>
</dbReference>
<dbReference type="HOGENOM" id="CLU_053818_1_1_9"/>
<dbReference type="OrthoDB" id="1550976at2"/>
<dbReference type="UniPathway" id="UPA00241">
    <property type="reaction ID" value="UER00352"/>
</dbReference>
<dbReference type="Proteomes" id="UP000001258">
    <property type="component" value="Chromosome"/>
</dbReference>
<dbReference type="GO" id="GO:0005737">
    <property type="term" value="C:cytoplasm"/>
    <property type="evidence" value="ECO:0007669"/>
    <property type="project" value="UniProtKB-SubCell"/>
</dbReference>
<dbReference type="GO" id="GO:0005524">
    <property type="term" value="F:ATP binding"/>
    <property type="evidence" value="ECO:0007669"/>
    <property type="project" value="UniProtKB-UniRule"/>
</dbReference>
<dbReference type="GO" id="GO:0004594">
    <property type="term" value="F:pantothenate kinase activity"/>
    <property type="evidence" value="ECO:0007669"/>
    <property type="project" value="UniProtKB-UniRule"/>
</dbReference>
<dbReference type="GO" id="GO:0015937">
    <property type="term" value="P:coenzyme A biosynthetic process"/>
    <property type="evidence" value="ECO:0007669"/>
    <property type="project" value="UniProtKB-UniRule"/>
</dbReference>
<dbReference type="CDD" id="cd02025">
    <property type="entry name" value="PanK"/>
    <property type="match status" value="1"/>
</dbReference>
<dbReference type="Gene3D" id="3.40.50.300">
    <property type="entry name" value="P-loop containing nucleotide triphosphate hydrolases"/>
    <property type="match status" value="1"/>
</dbReference>
<dbReference type="HAMAP" id="MF_00215">
    <property type="entry name" value="Pantothen_kinase_1"/>
    <property type="match status" value="1"/>
</dbReference>
<dbReference type="InterPro" id="IPR027417">
    <property type="entry name" value="P-loop_NTPase"/>
</dbReference>
<dbReference type="InterPro" id="IPR004566">
    <property type="entry name" value="PanK"/>
</dbReference>
<dbReference type="InterPro" id="IPR006083">
    <property type="entry name" value="PRK/URK"/>
</dbReference>
<dbReference type="NCBIfam" id="TIGR00554">
    <property type="entry name" value="panK_bact"/>
    <property type="match status" value="1"/>
</dbReference>
<dbReference type="PANTHER" id="PTHR10285">
    <property type="entry name" value="URIDINE KINASE"/>
    <property type="match status" value="1"/>
</dbReference>
<dbReference type="Pfam" id="PF00485">
    <property type="entry name" value="PRK"/>
    <property type="match status" value="1"/>
</dbReference>
<dbReference type="PIRSF" id="PIRSF000545">
    <property type="entry name" value="Pantothenate_kin"/>
    <property type="match status" value="1"/>
</dbReference>
<dbReference type="SUPFAM" id="SSF52540">
    <property type="entry name" value="P-loop containing nucleoside triphosphate hydrolases"/>
    <property type="match status" value="1"/>
</dbReference>
<comment type="catalytic activity">
    <reaction>
        <text>(R)-pantothenate + ATP = (R)-4'-phosphopantothenate + ADP + H(+)</text>
        <dbReference type="Rhea" id="RHEA:16373"/>
        <dbReference type="ChEBI" id="CHEBI:10986"/>
        <dbReference type="ChEBI" id="CHEBI:15378"/>
        <dbReference type="ChEBI" id="CHEBI:29032"/>
        <dbReference type="ChEBI" id="CHEBI:30616"/>
        <dbReference type="ChEBI" id="CHEBI:456216"/>
        <dbReference type="EC" id="2.7.1.33"/>
    </reaction>
</comment>
<comment type="pathway">
    <text>Cofactor biosynthesis; coenzyme A biosynthesis; CoA from (R)-pantothenate: step 1/5.</text>
</comment>
<comment type="subcellular location">
    <subcellularLocation>
        <location evidence="1">Cytoplasm</location>
    </subcellularLocation>
</comment>
<comment type="similarity">
    <text evidence="3">Belongs to the prokaryotic pantothenate kinase family.</text>
</comment>
<accession>Q9K8X7</accession>
<organism>
    <name type="scientific">Halalkalibacterium halodurans (strain ATCC BAA-125 / DSM 18197 / FERM 7344 / JCM 9153 / C-125)</name>
    <name type="common">Bacillus halodurans</name>
    <dbReference type="NCBI Taxonomy" id="272558"/>
    <lineage>
        <taxon>Bacteria</taxon>
        <taxon>Bacillati</taxon>
        <taxon>Bacillota</taxon>
        <taxon>Bacilli</taxon>
        <taxon>Bacillales</taxon>
        <taxon>Bacillaceae</taxon>
        <taxon>Halalkalibacterium (ex Joshi et al. 2022)</taxon>
    </lineage>
</organism>
<gene>
    <name type="primary">coaA</name>
    <name type="ordered locus">BH2875</name>
</gene>